<feature type="chain" id="PRO_1000084046" description="23S rRNA (uracil(747)-C(5))-methyltransferase RlmC">
    <location>
        <begin position="1"/>
        <end position="375"/>
    </location>
</feature>
<feature type="active site" description="Nucleophile" evidence="1">
    <location>
        <position position="334"/>
    </location>
</feature>
<feature type="binding site" evidence="1">
    <location>
        <position position="3"/>
    </location>
    <ligand>
        <name>[4Fe-4S] cluster</name>
        <dbReference type="ChEBI" id="CHEBI:49883"/>
    </ligand>
</feature>
<feature type="binding site" evidence="1">
    <location>
        <position position="11"/>
    </location>
    <ligand>
        <name>[4Fe-4S] cluster</name>
        <dbReference type="ChEBI" id="CHEBI:49883"/>
    </ligand>
</feature>
<feature type="binding site" evidence="1">
    <location>
        <position position="14"/>
    </location>
    <ligand>
        <name>[4Fe-4S] cluster</name>
        <dbReference type="ChEBI" id="CHEBI:49883"/>
    </ligand>
</feature>
<feature type="binding site" evidence="1">
    <location>
        <position position="87"/>
    </location>
    <ligand>
        <name>[4Fe-4S] cluster</name>
        <dbReference type="ChEBI" id="CHEBI:49883"/>
    </ligand>
</feature>
<feature type="binding site" evidence="1">
    <location>
        <position position="212"/>
    </location>
    <ligand>
        <name>S-adenosyl-L-methionine</name>
        <dbReference type="ChEBI" id="CHEBI:59789"/>
    </ligand>
</feature>
<feature type="binding site" evidence="1">
    <location>
        <position position="241"/>
    </location>
    <ligand>
        <name>S-adenosyl-L-methionine</name>
        <dbReference type="ChEBI" id="CHEBI:59789"/>
    </ligand>
</feature>
<feature type="binding site" evidence="1">
    <location>
        <position position="262"/>
    </location>
    <ligand>
        <name>S-adenosyl-L-methionine</name>
        <dbReference type="ChEBI" id="CHEBI:59789"/>
    </ligand>
</feature>
<feature type="binding site" evidence="1">
    <location>
        <position position="307"/>
    </location>
    <ligand>
        <name>S-adenosyl-L-methionine</name>
        <dbReference type="ChEBI" id="CHEBI:59789"/>
    </ligand>
</feature>
<proteinExistence type="inferred from homology"/>
<sequence length="375" mass="42128">MQCALYDAGRCRSCQWITQSVNEQLSAKTADLHRLLAGLPVEQWRTPIGGPEQHFRNKAKMVVSGSVEKPLFGMLHRDGTPVDLCGCPLYPASFAPVFSALKPFIARAGLTPYNVARKRGELKYLLLTESQFDGGMMLRFVLRSETKLTQLRAALPWLRAQLPQLRVITANIQPVHMAIMEGETEIYLTDQHALAERFNDVPLWIRPQSFFQTNPTVASRLYATARDWVGQLPVRHMWDLFCGVGGFGLHCATPQMQLTGIEIAPEAIACARQSAAELGLTRLHFQALDSTQFATAQGETPDLVLVNPPRRGIGKPLCDYLAQIAPRFIIYSSCNAQTMAQDIRHLPNYRIQRVQLFDMFPHTAHYEVLTLLCRL</sequence>
<organism>
    <name type="scientific">Salmonella arizonae (strain ATCC BAA-731 / CDC346-86 / RSK2980)</name>
    <dbReference type="NCBI Taxonomy" id="41514"/>
    <lineage>
        <taxon>Bacteria</taxon>
        <taxon>Pseudomonadati</taxon>
        <taxon>Pseudomonadota</taxon>
        <taxon>Gammaproteobacteria</taxon>
        <taxon>Enterobacterales</taxon>
        <taxon>Enterobacteriaceae</taxon>
        <taxon>Salmonella</taxon>
    </lineage>
</organism>
<gene>
    <name evidence="1" type="primary">rlmC</name>
    <name type="synonym">rumB</name>
    <name type="ordered locus">SARI_02048</name>
</gene>
<name>RLMC_SALAR</name>
<evidence type="ECO:0000255" key="1">
    <source>
        <dbReference type="HAMAP-Rule" id="MF_01012"/>
    </source>
</evidence>
<reference key="1">
    <citation type="submission" date="2007-11" db="EMBL/GenBank/DDBJ databases">
        <authorList>
            <consortium name="The Salmonella enterica serovar Arizonae Genome Sequencing Project"/>
            <person name="McClelland M."/>
            <person name="Sanderson E.K."/>
            <person name="Porwollik S."/>
            <person name="Spieth J."/>
            <person name="Clifton W.S."/>
            <person name="Fulton R."/>
            <person name="Chunyan W."/>
            <person name="Wollam A."/>
            <person name="Shah N."/>
            <person name="Pepin K."/>
            <person name="Bhonagiri V."/>
            <person name="Nash W."/>
            <person name="Johnson M."/>
            <person name="Thiruvilangam P."/>
            <person name="Wilson R."/>
        </authorList>
    </citation>
    <scope>NUCLEOTIDE SEQUENCE [LARGE SCALE GENOMIC DNA]</scope>
    <source>
        <strain>ATCC BAA-731 / CDC346-86 / RSK2980</strain>
    </source>
</reference>
<comment type="function">
    <text evidence="1">Catalyzes the formation of 5-methyl-uridine at position 747 (m5U747) in 23S rRNA.</text>
</comment>
<comment type="catalytic activity">
    <reaction evidence="1">
        <text>uridine(747) in 23S rRNA + S-adenosyl-L-methionine = 5-methyluridine(747) in 23S rRNA + S-adenosyl-L-homocysteine + H(+)</text>
        <dbReference type="Rhea" id="RHEA:42628"/>
        <dbReference type="Rhea" id="RHEA-COMP:10154"/>
        <dbReference type="Rhea" id="RHEA-COMP:10155"/>
        <dbReference type="ChEBI" id="CHEBI:15378"/>
        <dbReference type="ChEBI" id="CHEBI:57856"/>
        <dbReference type="ChEBI" id="CHEBI:59789"/>
        <dbReference type="ChEBI" id="CHEBI:65315"/>
        <dbReference type="ChEBI" id="CHEBI:74447"/>
        <dbReference type="EC" id="2.1.1.189"/>
    </reaction>
</comment>
<comment type="similarity">
    <text evidence="1">Belongs to the class I-like SAM-binding methyltransferase superfamily. RNA M5U methyltransferase family. RlmC subfamily.</text>
</comment>
<accession>A9MIM3</accession>
<dbReference type="EC" id="2.1.1.189" evidence="1"/>
<dbReference type="EMBL" id="CP000880">
    <property type="protein sequence ID" value="ABX21926.1"/>
    <property type="molecule type" value="Genomic_DNA"/>
</dbReference>
<dbReference type="SMR" id="A9MIM3"/>
<dbReference type="STRING" id="41514.SARI_02048"/>
<dbReference type="KEGG" id="ses:SARI_02048"/>
<dbReference type="HOGENOM" id="CLU_014689_0_0_6"/>
<dbReference type="Proteomes" id="UP000002084">
    <property type="component" value="Chromosome"/>
</dbReference>
<dbReference type="GO" id="GO:0051539">
    <property type="term" value="F:4 iron, 4 sulfur cluster binding"/>
    <property type="evidence" value="ECO:0007669"/>
    <property type="project" value="UniProtKB-KW"/>
</dbReference>
<dbReference type="GO" id="GO:0005506">
    <property type="term" value="F:iron ion binding"/>
    <property type="evidence" value="ECO:0007669"/>
    <property type="project" value="UniProtKB-UniRule"/>
</dbReference>
<dbReference type="GO" id="GO:0070041">
    <property type="term" value="F:rRNA (uridine-C5-)-methyltransferase activity"/>
    <property type="evidence" value="ECO:0007669"/>
    <property type="project" value="UniProtKB-UniRule"/>
</dbReference>
<dbReference type="GO" id="GO:0070475">
    <property type="term" value="P:rRNA base methylation"/>
    <property type="evidence" value="ECO:0007669"/>
    <property type="project" value="TreeGrafter"/>
</dbReference>
<dbReference type="CDD" id="cd02440">
    <property type="entry name" value="AdoMet_MTases"/>
    <property type="match status" value="1"/>
</dbReference>
<dbReference type="FunFam" id="2.40.50.1070:FF:000002">
    <property type="entry name" value="23S rRNA (uracil(747)-C(5))-methyltransferase RlmC"/>
    <property type="match status" value="1"/>
</dbReference>
<dbReference type="FunFam" id="3.40.50.150:FF:000049">
    <property type="entry name" value="23S rRNA (uracil(747)-C(5))-methyltransferase RlmC"/>
    <property type="match status" value="1"/>
</dbReference>
<dbReference type="Gene3D" id="2.40.50.1070">
    <property type="match status" value="1"/>
</dbReference>
<dbReference type="Gene3D" id="3.40.50.150">
    <property type="entry name" value="Vaccinia Virus protein VP39"/>
    <property type="match status" value="1"/>
</dbReference>
<dbReference type="HAMAP" id="MF_01012">
    <property type="entry name" value="23SrRNA_methyltr_RlmC"/>
    <property type="match status" value="1"/>
</dbReference>
<dbReference type="InterPro" id="IPR011825">
    <property type="entry name" value="23SrRNA_MeTrfase_RlmC"/>
</dbReference>
<dbReference type="InterPro" id="IPR030390">
    <property type="entry name" value="MeTrfase_TrmA_AS"/>
</dbReference>
<dbReference type="InterPro" id="IPR030391">
    <property type="entry name" value="MeTrfase_TrmA_CS"/>
</dbReference>
<dbReference type="InterPro" id="IPR029063">
    <property type="entry name" value="SAM-dependent_MTases_sf"/>
</dbReference>
<dbReference type="InterPro" id="IPR010280">
    <property type="entry name" value="U5_MeTrfase_fam"/>
</dbReference>
<dbReference type="NCBIfam" id="TIGR02085">
    <property type="entry name" value="meth_trns_rumB"/>
    <property type="match status" value="1"/>
</dbReference>
<dbReference type="PANTHER" id="PTHR11061">
    <property type="entry name" value="RNA M5U METHYLTRANSFERASE"/>
    <property type="match status" value="1"/>
</dbReference>
<dbReference type="PANTHER" id="PTHR11061:SF30">
    <property type="entry name" value="TRNA (URACIL(54)-C(5))-METHYLTRANSFERASE"/>
    <property type="match status" value="1"/>
</dbReference>
<dbReference type="Pfam" id="PF05958">
    <property type="entry name" value="tRNA_U5-meth_tr"/>
    <property type="match status" value="1"/>
</dbReference>
<dbReference type="SUPFAM" id="SSF53335">
    <property type="entry name" value="S-adenosyl-L-methionine-dependent methyltransferases"/>
    <property type="match status" value="1"/>
</dbReference>
<dbReference type="PROSITE" id="PS51687">
    <property type="entry name" value="SAM_MT_RNA_M5U"/>
    <property type="match status" value="1"/>
</dbReference>
<dbReference type="PROSITE" id="PS01230">
    <property type="entry name" value="TRMA_1"/>
    <property type="match status" value="1"/>
</dbReference>
<dbReference type="PROSITE" id="PS01231">
    <property type="entry name" value="TRMA_2"/>
    <property type="match status" value="1"/>
</dbReference>
<protein>
    <recommendedName>
        <fullName evidence="1">23S rRNA (uracil(747)-C(5))-methyltransferase RlmC</fullName>
        <ecNumber evidence="1">2.1.1.189</ecNumber>
    </recommendedName>
    <alternativeName>
        <fullName evidence="1">23S rRNA(m5U747)-methyltransferase</fullName>
    </alternativeName>
</protein>
<keyword id="KW-0004">4Fe-4S</keyword>
<keyword id="KW-0408">Iron</keyword>
<keyword id="KW-0411">Iron-sulfur</keyword>
<keyword id="KW-0479">Metal-binding</keyword>
<keyword id="KW-0489">Methyltransferase</keyword>
<keyword id="KW-1185">Reference proteome</keyword>
<keyword id="KW-0698">rRNA processing</keyword>
<keyword id="KW-0949">S-adenosyl-L-methionine</keyword>
<keyword id="KW-0808">Transferase</keyword>